<sequence length="179" mass="19227">MTFDLDIKNTVRTIPDYPKPGILFRDITTLLADARAFRRAVDELVHPWAGSKIDKVAGIEARGFILGGAVAHQLSAGFVPIRKKGKLPHKTVSMSYALEYGTDEMEMHVDAVQPGERVILVDDLIATGGTAEGAVKLLRQIGATVVAACFIIDLPDLGGAAKLRALDVPVRSLIAFDGH</sequence>
<keyword id="KW-0963">Cytoplasm</keyword>
<keyword id="KW-0328">Glycosyltransferase</keyword>
<keyword id="KW-0660">Purine salvage</keyword>
<keyword id="KW-1185">Reference proteome</keyword>
<keyword id="KW-0808">Transferase</keyword>
<feature type="chain" id="PRO_1000000262" description="Adenine phosphoribosyltransferase">
    <location>
        <begin position="1"/>
        <end position="179"/>
    </location>
</feature>
<comment type="function">
    <text evidence="1">Catalyzes a salvage reaction resulting in the formation of AMP, that is energically less costly than de novo synthesis.</text>
</comment>
<comment type="catalytic activity">
    <reaction evidence="1">
        <text>AMP + diphosphate = 5-phospho-alpha-D-ribose 1-diphosphate + adenine</text>
        <dbReference type="Rhea" id="RHEA:16609"/>
        <dbReference type="ChEBI" id="CHEBI:16708"/>
        <dbReference type="ChEBI" id="CHEBI:33019"/>
        <dbReference type="ChEBI" id="CHEBI:58017"/>
        <dbReference type="ChEBI" id="CHEBI:456215"/>
        <dbReference type="EC" id="2.4.2.7"/>
    </reaction>
</comment>
<comment type="pathway">
    <text evidence="1">Purine metabolism; AMP biosynthesis via salvage pathway; AMP from adenine: step 1/1.</text>
</comment>
<comment type="subunit">
    <text evidence="1">Homodimer.</text>
</comment>
<comment type="subcellular location">
    <subcellularLocation>
        <location evidence="1">Cytoplasm</location>
    </subcellularLocation>
</comment>
<comment type="similarity">
    <text evidence="1">Belongs to the purine/pyrimidine phosphoribosyltransferase family.</text>
</comment>
<accession>A4YPM4</accession>
<name>APT_BRASO</name>
<evidence type="ECO:0000255" key="1">
    <source>
        <dbReference type="HAMAP-Rule" id="MF_00004"/>
    </source>
</evidence>
<dbReference type="EC" id="2.4.2.7" evidence="1"/>
<dbReference type="EMBL" id="CU234118">
    <property type="protein sequence ID" value="CAL75850.1"/>
    <property type="molecule type" value="Genomic_DNA"/>
</dbReference>
<dbReference type="RefSeq" id="WP_011925073.1">
    <property type="nucleotide sequence ID" value="NC_009445.1"/>
</dbReference>
<dbReference type="SMR" id="A4YPM4"/>
<dbReference type="STRING" id="114615.BRADO1992"/>
<dbReference type="KEGG" id="bra:BRADO1992"/>
<dbReference type="eggNOG" id="COG0503">
    <property type="taxonomic scope" value="Bacteria"/>
</dbReference>
<dbReference type="HOGENOM" id="CLU_063339_3_0_5"/>
<dbReference type="OrthoDB" id="9803963at2"/>
<dbReference type="UniPathway" id="UPA00588">
    <property type="reaction ID" value="UER00646"/>
</dbReference>
<dbReference type="Proteomes" id="UP000001994">
    <property type="component" value="Chromosome"/>
</dbReference>
<dbReference type="GO" id="GO:0005737">
    <property type="term" value="C:cytoplasm"/>
    <property type="evidence" value="ECO:0007669"/>
    <property type="project" value="UniProtKB-SubCell"/>
</dbReference>
<dbReference type="GO" id="GO:0002055">
    <property type="term" value="F:adenine binding"/>
    <property type="evidence" value="ECO:0007669"/>
    <property type="project" value="TreeGrafter"/>
</dbReference>
<dbReference type="GO" id="GO:0003999">
    <property type="term" value="F:adenine phosphoribosyltransferase activity"/>
    <property type="evidence" value="ECO:0007669"/>
    <property type="project" value="UniProtKB-UniRule"/>
</dbReference>
<dbReference type="GO" id="GO:0016208">
    <property type="term" value="F:AMP binding"/>
    <property type="evidence" value="ECO:0007669"/>
    <property type="project" value="TreeGrafter"/>
</dbReference>
<dbReference type="GO" id="GO:0006168">
    <property type="term" value="P:adenine salvage"/>
    <property type="evidence" value="ECO:0007669"/>
    <property type="project" value="InterPro"/>
</dbReference>
<dbReference type="GO" id="GO:0044209">
    <property type="term" value="P:AMP salvage"/>
    <property type="evidence" value="ECO:0007669"/>
    <property type="project" value="UniProtKB-UniRule"/>
</dbReference>
<dbReference type="GO" id="GO:0006166">
    <property type="term" value="P:purine ribonucleoside salvage"/>
    <property type="evidence" value="ECO:0007669"/>
    <property type="project" value="UniProtKB-KW"/>
</dbReference>
<dbReference type="CDD" id="cd06223">
    <property type="entry name" value="PRTases_typeI"/>
    <property type="match status" value="1"/>
</dbReference>
<dbReference type="FunFam" id="3.40.50.2020:FF:000021">
    <property type="entry name" value="Adenine phosphoribosyltransferase"/>
    <property type="match status" value="1"/>
</dbReference>
<dbReference type="Gene3D" id="3.40.50.2020">
    <property type="match status" value="1"/>
</dbReference>
<dbReference type="HAMAP" id="MF_00004">
    <property type="entry name" value="Aden_phosphoribosyltr"/>
    <property type="match status" value="1"/>
</dbReference>
<dbReference type="InterPro" id="IPR005764">
    <property type="entry name" value="Ade_phspho_trans"/>
</dbReference>
<dbReference type="InterPro" id="IPR000836">
    <property type="entry name" value="PRibTrfase_dom"/>
</dbReference>
<dbReference type="InterPro" id="IPR029057">
    <property type="entry name" value="PRTase-like"/>
</dbReference>
<dbReference type="InterPro" id="IPR050054">
    <property type="entry name" value="UPRTase/APRTase"/>
</dbReference>
<dbReference type="NCBIfam" id="TIGR01090">
    <property type="entry name" value="apt"/>
    <property type="match status" value="1"/>
</dbReference>
<dbReference type="NCBIfam" id="NF002634">
    <property type="entry name" value="PRK02304.1-3"/>
    <property type="match status" value="1"/>
</dbReference>
<dbReference type="NCBIfam" id="NF002636">
    <property type="entry name" value="PRK02304.1-5"/>
    <property type="match status" value="1"/>
</dbReference>
<dbReference type="PANTHER" id="PTHR32315">
    <property type="entry name" value="ADENINE PHOSPHORIBOSYLTRANSFERASE"/>
    <property type="match status" value="1"/>
</dbReference>
<dbReference type="PANTHER" id="PTHR32315:SF3">
    <property type="entry name" value="ADENINE PHOSPHORIBOSYLTRANSFERASE"/>
    <property type="match status" value="1"/>
</dbReference>
<dbReference type="Pfam" id="PF00156">
    <property type="entry name" value="Pribosyltran"/>
    <property type="match status" value="1"/>
</dbReference>
<dbReference type="SUPFAM" id="SSF53271">
    <property type="entry name" value="PRTase-like"/>
    <property type="match status" value="1"/>
</dbReference>
<dbReference type="PROSITE" id="PS00103">
    <property type="entry name" value="PUR_PYR_PR_TRANSFER"/>
    <property type="match status" value="1"/>
</dbReference>
<organism>
    <name type="scientific">Bradyrhizobium sp. (strain ORS 278)</name>
    <dbReference type="NCBI Taxonomy" id="114615"/>
    <lineage>
        <taxon>Bacteria</taxon>
        <taxon>Pseudomonadati</taxon>
        <taxon>Pseudomonadota</taxon>
        <taxon>Alphaproteobacteria</taxon>
        <taxon>Hyphomicrobiales</taxon>
        <taxon>Nitrobacteraceae</taxon>
        <taxon>Bradyrhizobium</taxon>
    </lineage>
</organism>
<gene>
    <name evidence="1" type="primary">apt</name>
    <name type="ordered locus">BRADO1992</name>
</gene>
<proteinExistence type="inferred from homology"/>
<reference key="1">
    <citation type="journal article" date="2007" name="Science">
        <title>Legumes symbioses: absence of nod genes in photosynthetic bradyrhizobia.</title>
        <authorList>
            <person name="Giraud E."/>
            <person name="Moulin L."/>
            <person name="Vallenet D."/>
            <person name="Barbe V."/>
            <person name="Cytryn E."/>
            <person name="Avarre J.-C."/>
            <person name="Jaubert M."/>
            <person name="Simon D."/>
            <person name="Cartieaux F."/>
            <person name="Prin Y."/>
            <person name="Bena G."/>
            <person name="Hannibal L."/>
            <person name="Fardoux J."/>
            <person name="Kojadinovic M."/>
            <person name="Vuillet L."/>
            <person name="Lajus A."/>
            <person name="Cruveiller S."/>
            <person name="Rouy Z."/>
            <person name="Mangenot S."/>
            <person name="Segurens B."/>
            <person name="Dossat C."/>
            <person name="Franck W.L."/>
            <person name="Chang W.-S."/>
            <person name="Saunders E."/>
            <person name="Bruce D."/>
            <person name="Richardson P."/>
            <person name="Normand P."/>
            <person name="Dreyfus B."/>
            <person name="Pignol D."/>
            <person name="Stacey G."/>
            <person name="Emerich D."/>
            <person name="Vermeglio A."/>
            <person name="Medigue C."/>
            <person name="Sadowsky M."/>
        </authorList>
    </citation>
    <scope>NUCLEOTIDE SEQUENCE [LARGE SCALE GENOMIC DNA]</scope>
    <source>
        <strain>ORS 278</strain>
    </source>
</reference>
<protein>
    <recommendedName>
        <fullName evidence="1">Adenine phosphoribosyltransferase</fullName>
        <shortName evidence="1">APRT</shortName>
        <ecNumber evidence="1">2.4.2.7</ecNumber>
    </recommendedName>
</protein>